<feature type="chain" id="PRO_0000130281" description="Small ribosomal subunit protein uS3c">
    <location>
        <begin position="1"/>
        <end position="218"/>
    </location>
</feature>
<feature type="domain" description="KH type-2">
    <location>
        <begin position="39"/>
        <end position="120"/>
    </location>
</feature>
<accession>P19169</accession>
<dbReference type="EMBL" id="Z11874">
    <property type="protein sequence ID" value="CAA77920.1"/>
    <property type="molecule type" value="Genomic_DNA"/>
</dbReference>
<dbReference type="EMBL" id="M37463">
    <property type="protein sequence ID" value="AAA84227.1"/>
    <property type="molecule type" value="Genomic_DNA"/>
</dbReference>
<dbReference type="EMBL" id="X70810">
    <property type="protein sequence ID" value="CAA50103.1"/>
    <property type="molecule type" value="Genomic_DNA"/>
</dbReference>
<dbReference type="PIR" id="S26084">
    <property type="entry name" value="S26084"/>
</dbReference>
<dbReference type="RefSeq" id="NP_041916.1">
    <property type="nucleotide sequence ID" value="NC_001603.2"/>
</dbReference>
<dbReference type="SMR" id="P19169"/>
<dbReference type="GeneID" id="807520"/>
<dbReference type="GO" id="GO:0009507">
    <property type="term" value="C:chloroplast"/>
    <property type="evidence" value="ECO:0007669"/>
    <property type="project" value="UniProtKB-SubCell"/>
</dbReference>
<dbReference type="GO" id="GO:0022627">
    <property type="term" value="C:cytosolic small ribosomal subunit"/>
    <property type="evidence" value="ECO:0007669"/>
    <property type="project" value="TreeGrafter"/>
</dbReference>
<dbReference type="GO" id="GO:0019843">
    <property type="term" value="F:rRNA binding"/>
    <property type="evidence" value="ECO:0007669"/>
    <property type="project" value="UniProtKB-UniRule"/>
</dbReference>
<dbReference type="GO" id="GO:0003735">
    <property type="term" value="F:structural constituent of ribosome"/>
    <property type="evidence" value="ECO:0007669"/>
    <property type="project" value="InterPro"/>
</dbReference>
<dbReference type="GO" id="GO:0006412">
    <property type="term" value="P:translation"/>
    <property type="evidence" value="ECO:0007669"/>
    <property type="project" value="UniProtKB-UniRule"/>
</dbReference>
<dbReference type="CDD" id="cd02412">
    <property type="entry name" value="KH-II_30S_S3"/>
    <property type="match status" value="1"/>
</dbReference>
<dbReference type="Gene3D" id="3.30.300.20">
    <property type="match status" value="1"/>
</dbReference>
<dbReference type="Gene3D" id="3.30.1140.32">
    <property type="entry name" value="Ribosomal protein S3, C-terminal domain"/>
    <property type="match status" value="1"/>
</dbReference>
<dbReference type="HAMAP" id="MF_01309_B">
    <property type="entry name" value="Ribosomal_uS3_B"/>
    <property type="match status" value="1"/>
</dbReference>
<dbReference type="InterPro" id="IPR015946">
    <property type="entry name" value="KH_dom-like_a/b"/>
</dbReference>
<dbReference type="InterPro" id="IPR004044">
    <property type="entry name" value="KH_dom_type_2"/>
</dbReference>
<dbReference type="InterPro" id="IPR009019">
    <property type="entry name" value="KH_sf_prok-type"/>
</dbReference>
<dbReference type="InterPro" id="IPR036419">
    <property type="entry name" value="Ribosomal_S3_C_sf"/>
</dbReference>
<dbReference type="InterPro" id="IPR005704">
    <property type="entry name" value="Ribosomal_uS3_bac-typ"/>
</dbReference>
<dbReference type="InterPro" id="IPR001351">
    <property type="entry name" value="Ribosomal_uS3_C"/>
</dbReference>
<dbReference type="InterPro" id="IPR018280">
    <property type="entry name" value="Ribosomal_uS3_CS"/>
</dbReference>
<dbReference type="NCBIfam" id="TIGR01009">
    <property type="entry name" value="rpsC_bact"/>
    <property type="match status" value="1"/>
</dbReference>
<dbReference type="PANTHER" id="PTHR11760">
    <property type="entry name" value="30S/40S RIBOSOMAL PROTEIN S3"/>
    <property type="match status" value="1"/>
</dbReference>
<dbReference type="PANTHER" id="PTHR11760:SF19">
    <property type="entry name" value="SMALL RIBOSOMAL SUBUNIT PROTEIN US3C"/>
    <property type="match status" value="1"/>
</dbReference>
<dbReference type="Pfam" id="PF07650">
    <property type="entry name" value="KH_2"/>
    <property type="match status" value="1"/>
</dbReference>
<dbReference type="Pfam" id="PF00189">
    <property type="entry name" value="Ribosomal_S3_C"/>
    <property type="match status" value="1"/>
</dbReference>
<dbReference type="SUPFAM" id="SSF54814">
    <property type="entry name" value="Prokaryotic type KH domain (KH-domain type II)"/>
    <property type="match status" value="1"/>
</dbReference>
<dbReference type="SUPFAM" id="SSF54821">
    <property type="entry name" value="Ribosomal protein S3 C-terminal domain"/>
    <property type="match status" value="1"/>
</dbReference>
<dbReference type="PROSITE" id="PS50823">
    <property type="entry name" value="KH_TYPE_2"/>
    <property type="match status" value="1"/>
</dbReference>
<dbReference type="PROSITE" id="PS00548">
    <property type="entry name" value="RIBOSOMAL_S3"/>
    <property type="match status" value="1"/>
</dbReference>
<name>RR3_EUGGR</name>
<organism>
    <name type="scientific">Euglena gracilis</name>
    <dbReference type="NCBI Taxonomy" id="3039"/>
    <lineage>
        <taxon>Eukaryota</taxon>
        <taxon>Discoba</taxon>
        <taxon>Euglenozoa</taxon>
        <taxon>Euglenida</taxon>
        <taxon>Spirocuta</taxon>
        <taxon>Euglenophyceae</taxon>
        <taxon>Euglenales</taxon>
        <taxon>Euglenaceae</taxon>
        <taxon>Euglena</taxon>
    </lineage>
</organism>
<protein>
    <recommendedName>
        <fullName evidence="2">Small ribosomal subunit protein uS3c</fullName>
    </recommendedName>
    <alternativeName>
        <fullName>30S ribosomal protein S3, chloroplastic</fullName>
    </alternativeName>
</protein>
<proteinExistence type="inferred from homology"/>
<gene>
    <name type="primary">rps3</name>
</gene>
<comment type="subunit">
    <text evidence="1">Part of the 30S ribosomal subunit.</text>
</comment>
<comment type="subcellular location">
    <subcellularLocation>
        <location>Plastid</location>
        <location>Chloroplast</location>
    </subcellularLocation>
</comment>
<comment type="similarity">
    <text evidence="2">Belongs to the universal ribosomal protein uS3 family.</text>
</comment>
<geneLocation type="chloroplast"/>
<reference key="1">
    <citation type="journal article" date="1988" name="Curr. Genet.">
        <title>Organization of ribosomal protein genes rpl23, rpl2, rps19, rpl22 and rps3 on the Euglena gracilis chloroplast genome.</title>
        <authorList>
            <person name="Christopher D.A."/>
            <person name="Cushman J.C."/>
            <person name="Price C.A."/>
            <person name="Hallick R.B."/>
        </authorList>
    </citation>
    <scope>NUCLEOTIDE SEQUENCE [GENOMIC DNA]</scope>
    <source>
        <strain>Z / UTEX 753</strain>
    </source>
</reference>
<reference key="2">
    <citation type="journal article" date="1993" name="Nucleic Acids Res.">
        <title>Complete sequence of Euglena gracilis chloroplast DNA.</title>
        <authorList>
            <person name="Hallick R.B."/>
            <person name="Hong L."/>
            <person name="Drager R.G."/>
            <person name="Favreau M.R."/>
            <person name="Monfort A."/>
            <person name="Orsat B."/>
            <person name="Spielmann A."/>
            <person name="Stutz E."/>
        </authorList>
    </citation>
    <scope>NUCLEOTIDE SEQUENCE [LARGE SCALE GENOMIC DNA]</scope>
    <source>
        <strain>Z / UTEX 753</strain>
    </source>
</reference>
<evidence type="ECO:0000250" key="1"/>
<evidence type="ECO:0000305" key="2"/>
<keyword id="KW-0150">Chloroplast</keyword>
<keyword id="KW-0934">Plastid</keyword>
<keyword id="KW-0687">Ribonucleoprotein</keyword>
<keyword id="KW-0689">Ribosomal protein</keyword>
<keyword id="KW-0694">RNA-binding</keyword>
<keyword id="KW-0699">rRNA-binding</keyword>
<sequence>MGQKVHPLGFRLGITKSHSSFWYVERRHYASFVKEDIVIRNFMNKELLETLISLIKIERIYEFSEQRNNTIVYIHVARPERVIGRDGQGLSRIRDILIDRMNYLLGKTPRIITCKVVGVTSPNLDARLLADSVRRELEKRTPFIRAMKTVMLQAMKAGAEGIKVQVSGRLNGIEIARTEWFREGRVPLHTLRADIDYFNDIAHTIYGVLGIKVWVYKV</sequence>